<organism>
    <name type="scientific">Chlorobium phaeobacteroides (strain DSM 266 / SMG 266 / 2430)</name>
    <dbReference type="NCBI Taxonomy" id="290317"/>
    <lineage>
        <taxon>Bacteria</taxon>
        <taxon>Pseudomonadati</taxon>
        <taxon>Chlorobiota</taxon>
        <taxon>Chlorobiia</taxon>
        <taxon>Chlorobiales</taxon>
        <taxon>Chlorobiaceae</taxon>
        <taxon>Chlorobium/Pelodictyon group</taxon>
        <taxon>Chlorobium</taxon>
    </lineage>
</organism>
<gene>
    <name evidence="1" type="primary">rpsK</name>
    <name type="ordered locus">Cpha266_2398</name>
</gene>
<proteinExistence type="inferred from homology"/>
<accession>A1BJ09</accession>
<reference key="1">
    <citation type="submission" date="2006-12" db="EMBL/GenBank/DDBJ databases">
        <title>Complete sequence of Chlorobium phaeobacteroides DSM 266.</title>
        <authorList>
            <consortium name="US DOE Joint Genome Institute"/>
            <person name="Copeland A."/>
            <person name="Lucas S."/>
            <person name="Lapidus A."/>
            <person name="Barry K."/>
            <person name="Detter J.C."/>
            <person name="Glavina del Rio T."/>
            <person name="Hammon N."/>
            <person name="Israni S."/>
            <person name="Pitluck S."/>
            <person name="Goltsman E."/>
            <person name="Schmutz J."/>
            <person name="Larimer F."/>
            <person name="Land M."/>
            <person name="Hauser L."/>
            <person name="Mikhailova N."/>
            <person name="Li T."/>
            <person name="Overmann J."/>
            <person name="Bryant D.A."/>
            <person name="Richardson P."/>
        </authorList>
    </citation>
    <scope>NUCLEOTIDE SEQUENCE [LARGE SCALE GENOMIC DNA]</scope>
    <source>
        <strain>DSM 266 / SMG 266 / 2430</strain>
    </source>
</reference>
<dbReference type="EMBL" id="CP000492">
    <property type="protein sequence ID" value="ABL66386.1"/>
    <property type="molecule type" value="Genomic_DNA"/>
</dbReference>
<dbReference type="RefSeq" id="WP_011746169.1">
    <property type="nucleotide sequence ID" value="NC_008639.1"/>
</dbReference>
<dbReference type="SMR" id="A1BJ09"/>
<dbReference type="STRING" id="290317.Cpha266_2398"/>
<dbReference type="KEGG" id="cph:Cpha266_2398"/>
<dbReference type="eggNOG" id="COG0100">
    <property type="taxonomic scope" value="Bacteria"/>
</dbReference>
<dbReference type="HOGENOM" id="CLU_072439_5_3_10"/>
<dbReference type="OrthoDB" id="9806415at2"/>
<dbReference type="Proteomes" id="UP000008701">
    <property type="component" value="Chromosome"/>
</dbReference>
<dbReference type="GO" id="GO:1990904">
    <property type="term" value="C:ribonucleoprotein complex"/>
    <property type="evidence" value="ECO:0007669"/>
    <property type="project" value="UniProtKB-KW"/>
</dbReference>
<dbReference type="GO" id="GO:0005840">
    <property type="term" value="C:ribosome"/>
    <property type="evidence" value="ECO:0007669"/>
    <property type="project" value="UniProtKB-KW"/>
</dbReference>
<dbReference type="GO" id="GO:0019843">
    <property type="term" value="F:rRNA binding"/>
    <property type="evidence" value="ECO:0007669"/>
    <property type="project" value="UniProtKB-UniRule"/>
</dbReference>
<dbReference type="GO" id="GO:0003735">
    <property type="term" value="F:structural constituent of ribosome"/>
    <property type="evidence" value="ECO:0007669"/>
    <property type="project" value="InterPro"/>
</dbReference>
<dbReference type="GO" id="GO:0006412">
    <property type="term" value="P:translation"/>
    <property type="evidence" value="ECO:0007669"/>
    <property type="project" value="UniProtKB-UniRule"/>
</dbReference>
<dbReference type="FunFam" id="3.30.420.80:FF:000004">
    <property type="entry name" value="30S ribosomal protein S11"/>
    <property type="match status" value="1"/>
</dbReference>
<dbReference type="Gene3D" id="3.30.420.80">
    <property type="entry name" value="Ribosomal protein S11"/>
    <property type="match status" value="1"/>
</dbReference>
<dbReference type="HAMAP" id="MF_01310">
    <property type="entry name" value="Ribosomal_uS11"/>
    <property type="match status" value="1"/>
</dbReference>
<dbReference type="InterPro" id="IPR001971">
    <property type="entry name" value="Ribosomal_uS11"/>
</dbReference>
<dbReference type="InterPro" id="IPR019981">
    <property type="entry name" value="Ribosomal_uS11_bac-type"/>
</dbReference>
<dbReference type="InterPro" id="IPR018102">
    <property type="entry name" value="Ribosomal_uS11_CS"/>
</dbReference>
<dbReference type="InterPro" id="IPR036967">
    <property type="entry name" value="Ribosomal_uS11_sf"/>
</dbReference>
<dbReference type="NCBIfam" id="NF003698">
    <property type="entry name" value="PRK05309.1"/>
    <property type="match status" value="1"/>
</dbReference>
<dbReference type="NCBIfam" id="TIGR03632">
    <property type="entry name" value="uS11_bact"/>
    <property type="match status" value="1"/>
</dbReference>
<dbReference type="PANTHER" id="PTHR11759">
    <property type="entry name" value="40S RIBOSOMAL PROTEIN S14/30S RIBOSOMAL PROTEIN S11"/>
    <property type="match status" value="1"/>
</dbReference>
<dbReference type="Pfam" id="PF00411">
    <property type="entry name" value="Ribosomal_S11"/>
    <property type="match status" value="1"/>
</dbReference>
<dbReference type="PIRSF" id="PIRSF002131">
    <property type="entry name" value="Ribosomal_S11"/>
    <property type="match status" value="1"/>
</dbReference>
<dbReference type="SUPFAM" id="SSF53137">
    <property type="entry name" value="Translational machinery components"/>
    <property type="match status" value="1"/>
</dbReference>
<dbReference type="PROSITE" id="PS00054">
    <property type="entry name" value="RIBOSOMAL_S11"/>
    <property type="match status" value="1"/>
</dbReference>
<feature type="chain" id="PRO_0000294736" description="Small ribosomal subunit protein uS11">
    <location>
        <begin position="1"/>
        <end position="127"/>
    </location>
</feature>
<sequence>MATVSRKKKKVKVTPEGTVHIKASFNNIMVTITDVLGNTVSWSSAGKNGFKGSKKNTPYASQITSEAAAKEAFDLGMRHVNVLIKGPGAGRDAAIRALQGAGLEVRSIKDITPLPHNGCRPPKRRRV</sequence>
<comment type="function">
    <text evidence="1">Located on the platform of the 30S subunit, it bridges several disparate RNA helices of the 16S rRNA. Forms part of the Shine-Dalgarno cleft in the 70S ribosome.</text>
</comment>
<comment type="subunit">
    <text evidence="1">Part of the 30S ribosomal subunit. Interacts with proteins S7 and S18. Binds to IF-3.</text>
</comment>
<comment type="similarity">
    <text evidence="1">Belongs to the universal ribosomal protein uS11 family.</text>
</comment>
<name>RS11_CHLPD</name>
<evidence type="ECO:0000255" key="1">
    <source>
        <dbReference type="HAMAP-Rule" id="MF_01310"/>
    </source>
</evidence>
<evidence type="ECO:0000305" key="2"/>
<protein>
    <recommendedName>
        <fullName evidence="1">Small ribosomal subunit protein uS11</fullName>
    </recommendedName>
    <alternativeName>
        <fullName evidence="2">30S ribosomal protein S11</fullName>
    </alternativeName>
</protein>
<keyword id="KW-1185">Reference proteome</keyword>
<keyword id="KW-0687">Ribonucleoprotein</keyword>
<keyword id="KW-0689">Ribosomal protein</keyword>
<keyword id="KW-0694">RNA-binding</keyword>
<keyword id="KW-0699">rRNA-binding</keyword>